<name>Y2028_RIPO1</name>
<comment type="subcellular location">
    <subcellularLocation>
        <location evidence="1">Cytoplasm</location>
    </subcellularLocation>
</comment>
<comment type="similarity">
    <text evidence="1">Belongs to the TACO1 family.</text>
</comment>
<proteinExistence type="inferred from homology"/>
<gene>
    <name type="ordered locus">PCC8801_2028</name>
</gene>
<reference key="1">
    <citation type="journal article" date="2011" name="MBio">
        <title>Novel metabolic attributes of the genus Cyanothece, comprising a group of unicellular nitrogen-fixing Cyanobacteria.</title>
        <authorList>
            <person name="Bandyopadhyay A."/>
            <person name="Elvitigala T."/>
            <person name="Welsh E."/>
            <person name="Stockel J."/>
            <person name="Liberton M."/>
            <person name="Min H."/>
            <person name="Sherman L.A."/>
            <person name="Pakrasi H.B."/>
        </authorList>
    </citation>
    <scope>NUCLEOTIDE SEQUENCE [LARGE SCALE GENOMIC DNA]</scope>
    <source>
        <strain>PCC 8801 / RF-1</strain>
    </source>
</reference>
<evidence type="ECO:0000255" key="1">
    <source>
        <dbReference type="HAMAP-Rule" id="MF_00693"/>
    </source>
</evidence>
<feature type="chain" id="PRO_1000132184" description="Probable transcriptional regulatory protein PCC8801_2028">
    <location>
        <begin position="1"/>
        <end position="255"/>
    </location>
</feature>
<dbReference type="EMBL" id="CP001287">
    <property type="protein sequence ID" value="ACK66063.1"/>
    <property type="molecule type" value="Genomic_DNA"/>
</dbReference>
<dbReference type="RefSeq" id="WP_012595332.1">
    <property type="nucleotide sequence ID" value="NC_011726.1"/>
</dbReference>
<dbReference type="SMR" id="B7JYY6"/>
<dbReference type="STRING" id="41431.PCC8801_2028"/>
<dbReference type="KEGG" id="cyp:PCC8801_2028"/>
<dbReference type="eggNOG" id="COG0217">
    <property type="taxonomic scope" value="Bacteria"/>
</dbReference>
<dbReference type="HOGENOM" id="CLU_062974_3_0_3"/>
<dbReference type="OrthoDB" id="9781053at2"/>
<dbReference type="Proteomes" id="UP000008204">
    <property type="component" value="Chromosome"/>
</dbReference>
<dbReference type="GO" id="GO:0005829">
    <property type="term" value="C:cytosol"/>
    <property type="evidence" value="ECO:0007669"/>
    <property type="project" value="TreeGrafter"/>
</dbReference>
<dbReference type="GO" id="GO:0003677">
    <property type="term" value="F:DNA binding"/>
    <property type="evidence" value="ECO:0007669"/>
    <property type="project" value="UniProtKB-UniRule"/>
</dbReference>
<dbReference type="GO" id="GO:0006355">
    <property type="term" value="P:regulation of DNA-templated transcription"/>
    <property type="evidence" value="ECO:0007669"/>
    <property type="project" value="UniProtKB-UniRule"/>
</dbReference>
<dbReference type="FunFam" id="1.10.10.200:FF:000002">
    <property type="entry name" value="Probable transcriptional regulatory protein CLM62_37755"/>
    <property type="match status" value="1"/>
</dbReference>
<dbReference type="Gene3D" id="1.10.10.200">
    <property type="match status" value="1"/>
</dbReference>
<dbReference type="Gene3D" id="3.30.70.980">
    <property type="match status" value="2"/>
</dbReference>
<dbReference type="HAMAP" id="MF_00693">
    <property type="entry name" value="Transcrip_reg_TACO1"/>
    <property type="match status" value="1"/>
</dbReference>
<dbReference type="InterPro" id="IPR017856">
    <property type="entry name" value="Integrase-like_N"/>
</dbReference>
<dbReference type="InterPro" id="IPR048300">
    <property type="entry name" value="TACO1_YebC-like_2nd/3rd_dom"/>
</dbReference>
<dbReference type="InterPro" id="IPR049083">
    <property type="entry name" value="TACO1_YebC_N"/>
</dbReference>
<dbReference type="InterPro" id="IPR002876">
    <property type="entry name" value="Transcrip_reg_TACO1-like"/>
</dbReference>
<dbReference type="InterPro" id="IPR026564">
    <property type="entry name" value="Transcrip_reg_TACO1-like_dom3"/>
</dbReference>
<dbReference type="InterPro" id="IPR029072">
    <property type="entry name" value="YebC-like"/>
</dbReference>
<dbReference type="NCBIfam" id="NF001030">
    <property type="entry name" value="PRK00110.1"/>
    <property type="match status" value="1"/>
</dbReference>
<dbReference type="NCBIfam" id="NF009044">
    <property type="entry name" value="PRK12378.1"/>
    <property type="match status" value="1"/>
</dbReference>
<dbReference type="NCBIfam" id="TIGR01033">
    <property type="entry name" value="YebC/PmpR family DNA-binding transcriptional regulator"/>
    <property type="match status" value="1"/>
</dbReference>
<dbReference type="PANTHER" id="PTHR12532:SF6">
    <property type="entry name" value="TRANSCRIPTIONAL REGULATORY PROTEIN YEBC-RELATED"/>
    <property type="match status" value="1"/>
</dbReference>
<dbReference type="PANTHER" id="PTHR12532">
    <property type="entry name" value="TRANSLATIONAL ACTIVATOR OF CYTOCHROME C OXIDASE 1"/>
    <property type="match status" value="1"/>
</dbReference>
<dbReference type="Pfam" id="PF20772">
    <property type="entry name" value="TACO1_YebC_N"/>
    <property type="match status" value="1"/>
</dbReference>
<dbReference type="Pfam" id="PF01709">
    <property type="entry name" value="Transcrip_reg"/>
    <property type="match status" value="1"/>
</dbReference>
<dbReference type="SUPFAM" id="SSF75625">
    <property type="entry name" value="YebC-like"/>
    <property type="match status" value="1"/>
</dbReference>
<sequence length="255" mass="28205">MAGHSKWANIKRQKERVDAKKGKTFAQLSRAIIVAARHGLPDPTGNFQLRTAIEKAKAAGIPNENIERAIAKGAGTYENDDTIYEEIRYEGYGPGGVAILIEALTDNRNRTAADLRAAFSKRGGNLGETGCVSWMFDQKGVILIEGEVNEDRLLEASVEGGADSYELFSEDEEIGAEVFTEVTNLERLTQTLKEKQFNVTEAELRWIPNNRMDVNDPEQARSLLKLIDALESLDDVQNVTANFEIAEELMMANVA</sequence>
<organism>
    <name type="scientific">Rippkaea orientalis (strain PCC 8801 / RF-1)</name>
    <name type="common">Cyanothece sp. (strain PCC 8801)</name>
    <dbReference type="NCBI Taxonomy" id="41431"/>
    <lineage>
        <taxon>Bacteria</taxon>
        <taxon>Bacillati</taxon>
        <taxon>Cyanobacteriota</taxon>
        <taxon>Cyanophyceae</taxon>
        <taxon>Oscillatoriophycideae</taxon>
        <taxon>Chroococcales</taxon>
        <taxon>Aphanothecaceae</taxon>
        <taxon>Rippkaea</taxon>
        <taxon>Rippkaea orientalis</taxon>
    </lineage>
</organism>
<keyword id="KW-0963">Cytoplasm</keyword>
<keyword id="KW-0238">DNA-binding</keyword>
<keyword id="KW-1185">Reference proteome</keyword>
<keyword id="KW-0804">Transcription</keyword>
<keyword id="KW-0805">Transcription regulation</keyword>
<protein>
    <recommendedName>
        <fullName evidence="1">Probable transcriptional regulatory protein PCC8801_2028</fullName>
    </recommendedName>
</protein>
<accession>B7JYY6</accession>